<keyword id="KW-1003">Cell membrane</keyword>
<keyword id="KW-0325">Glycoprotein</keyword>
<keyword id="KW-0472">Membrane</keyword>
<keyword id="KW-0597">Phosphoprotein</keyword>
<keyword id="KW-1185">Reference proteome</keyword>
<keyword id="KW-0677">Repeat</keyword>
<keyword id="KW-0812">Transmembrane</keyword>
<keyword id="KW-1133">Transmembrane helix</keyword>
<keyword id="KW-0813">Transport</keyword>
<comment type="function">
    <text evidence="2">Forms a water channel that facilitates the transport of water across cell membranes, playing a crucial role in water homeostasis in various tissues. Could also be permeable to small solutes including hydrogen peroxide, glycerol and gases such as amonnia (NH3), nitric oxide (NO) and carbon dioxide (CO2). Recruited to the ankyrin-1 complex, a multiprotein complex of the erythrocyte membrane, it could be part of a CO2 metabolon, linking facilitated diffusion of CO2 across the membrane, anion exchange of Cl(-)/HCO3(-) and interconversion of dissolved CO2 and carbonic acid in the cytosol. In vitro, it shows non-selective gated cation channel activity and may be permeable to cations like K(+) and Na(+) in vivo.</text>
</comment>
<comment type="catalytic activity">
    <reaction evidence="2">
        <text>H2O(in) = H2O(out)</text>
        <dbReference type="Rhea" id="RHEA:29667"/>
        <dbReference type="ChEBI" id="CHEBI:15377"/>
    </reaction>
</comment>
<comment type="catalytic activity">
    <reaction evidence="2">
        <text>nitric oxide(out) = nitric oxide(in)</text>
        <dbReference type="Rhea" id="RHEA:74895"/>
        <dbReference type="ChEBI" id="CHEBI:16480"/>
    </reaction>
</comment>
<comment type="catalytic activity">
    <reaction evidence="2">
        <text>CO2(out) = CO2(in)</text>
        <dbReference type="Rhea" id="RHEA:74891"/>
        <dbReference type="ChEBI" id="CHEBI:16526"/>
    </reaction>
</comment>
<comment type="catalytic activity">
    <reaction evidence="2">
        <text>glycerol(in) = glycerol(out)</text>
        <dbReference type="Rhea" id="RHEA:29675"/>
        <dbReference type="ChEBI" id="CHEBI:17754"/>
    </reaction>
</comment>
<comment type="catalytic activity">
    <reaction evidence="2">
        <text>H2O2(out) = H2O2(in)</text>
        <dbReference type="Rhea" id="RHEA:74375"/>
        <dbReference type="ChEBI" id="CHEBI:16240"/>
    </reaction>
</comment>
<comment type="catalytic activity">
    <reaction evidence="2">
        <text>K(+)(in) = K(+)(out)</text>
        <dbReference type="Rhea" id="RHEA:29463"/>
        <dbReference type="ChEBI" id="CHEBI:29103"/>
    </reaction>
</comment>
<comment type="catalytic activity">
    <reaction evidence="2">
        <text>Na(+)(in) = Na(+)(out)</text>
        <dbReference type="Rhea" id="RHEA:34963"/>
        <dbReference type="ChEBI" id="CHEBI:29101"/>
    </reaction>
</comment>
<comment type="subunit">
    <text evidence="1 2 3">Homotetramer; each monomer provides an independent water pore. Component of the ankyrin-1 complex in the erythrocyte, composed of ANK1, RHCE, RHAG, SLC4A1, EPB42, GYPA, GYPB and AQP1 (By similarity). Interacts with EPHB2; involved in endolymph production in the inner ear (By similarity). Identified in a complex with STOM. Interacts (via the N-terminal) with ANK1 (via ANK 1-5 repeats). Interacts (via the C-terminal) with EPB42 (By similarity).</text>
</comment>
<comment type="subcellular location">
    <subcellularLocation>
        <location evidence="5">Cell membrane</location>
        <topology evidence="2">Multi-pass membrane protein</topology>
    </subcellularLocation>
</comment>
<comment type="tissue specificity">
    <text>Erythrocytes and renal tubules.</text>
</comment>
<comment type="domain">
    <text evidence="2">Aquaporins contain two tandem repeats each containing three membrane-spanning domains and a pore-forming loop with the signature motif Asn-Pro-Ala (NPA).</text>
</comment>
<comment type="similarity">
    <text evidence="6">Belongs to the MIP/aquaporin (TC 1.A.8) family.</text>
</comment>
<dbReference type="EMBL" id="X67948">
    <property type="protein sequence ID" value="CAA48134.1"/>
    <property type="molecule type" value="mRNA"/>
</dbReference>
<dbReference type="EMBL" id="L07268">
    <property type="protein sequence ID" value="AAB46624.1"/>
    <property type="molecule type" value="mRNA"/>
</dbReference>
<dbReference type="EMBL" id="X70257">
    <property type="protein sequence ID" value="CAA49761.1"/>
    <property type="molecule type" value="mRNA"/>
</dbReference>
<dbReference type="EMBL" id="X71069">
    <property type="protein sequence ID" value="CAA50395.1"/>
    <property type="molecule type" value="mRNA"/>
</dbReference>
<dbReference type="EMBL" id="BC090068">
    <property type="protein sequence ID" value="AAH90068.1"/>
    <property type="molecule type" value="mRNA"/>
</dbReference>
<dbReference type="PIR" id="JC1320">
    <property type="entry name" value="JC1320"/>
</dbReference>
<dbReference type="RefSeq" id="NP_036910.1">
    <property type="nucleotide sequence ID" value="NM_012778.2"/>
</dbReference>
<dbReference type="SMR" id="P29975"/>
<dbReference type="BioGRID" id="247280">
    <property type="interactions" value="1"/>
</dbReference>
<dbReference type="CORUM" id="P29975"/>
<dbReference type="FunCoup" id="P29975">
    <property type="interactions" value="73"/>
</dbReference>
<dbReference type="STRING" id="10116.ENSRNOP00000015692"/>
<dbReference type="GlyCosmos" id="P29975">
    <property type="glycosylation" value="2 sites, No reported glycans"/>
</dbReference>
<dbReference type="GlyGen" id="P29975">
    <property type="glycosylation" value="4 sites"/>
</dbReference>
<dbReference type="iPTMnet" id="P29975"/>
<dbReference type="PhosphoSitePlus" id="P29975"/>
<dbReference type="SwissPalm" id="P29975"/>
<dbReference type="PaxDb" id="10116-ENSRNOP00000015692"/>
<dbReference type="Ensembl" id="ENSRNOT00000015692.3">
    <property type="protein sequence ID" value="ENSRNOP00000015692.1"/>
    <property type="gene ID" value="ENSRNOG00000011648.4"/>
</dbReference>
<dbReference type="GeneID" id="25240"/>
<dbReference type="KEGG" id="rno:25240"/>
<dbReference type="UCSC" id="RGD:2141">
    <property type="organism name" value="rat"/>
</dbReference>
<dbReference type="AGR" id="RGD:2141"/>
<dbReference type="CTD" id="358"/>
<dbReference type="RGD" id="2141">
    <property type="gene designation" value="Aqp1"/>
</dbReference>
<dbReference type="eggNOG" id="KOG0223">
    <property type="taxonomic scope" value="Eukaryota"/>
</dbReference>
<dbReference type="GeneTree" id="ENSGT00940000157015"/>
<dbReference type="InParanoid" id="P29975"/>
<dbReference type="OMA" id="FKKKMFW"/>
<dbReference type="OrthoDB" id="3222at2759"/>
<dbReference type="PhylomeDB" id="P29975"/>
<dbReference type="TreeFam" id="TF312940"/>
<dbReference type="Reactome" id="R-RNO-1237044">
    <property type="pathway name" value="Erythrocytes take up carbon dioxide and release oxygen"/>
</dbReference>
<dbReference type="Reactome" id="R-RNO-1247673">
    <property type="pathway name" value="Erythrocytes take up oxygen and release carbon dioxide"/>
</dbReference>
<dbReference type="Reactome" id="R-RNO-432040">
    <property type="pathway name" value="Vasopressin regulates renal water homeostasis via Aquaporins"/>
</dbReference>
<dbReference type="Reactome" id="R-RNO-432047">
    <property type="pathway name" value="Passive transport by Aquaporins"/>
</dbReference>
<dbReference type="PRO" id="PR:P29975"/>
<dbReference type="Proteomes" id="UP000002494">
    <property type="component" value="Chromosome 4"/>
</dbReference>
<dbReference type="Bgee" id="ENSRNOG00000011648">
    <property type="expression patterns" value="Expressed in adult mammalian kidney and 19 other cell types or tissues"/>
</dbReference>
<dbReference type="ExpressionAtlas" id="P29975">
    <property type="expression patterns" value="baseline and differential"/>
</dbReference>
<dbReference type="GO" id="GO:0170014">
    <property type="term" value="C:ankyrin-1 complex"/>
    <property type="evidence" value="ECO:0000250"/>
    <property type="project" value="UniProtKB"/>
</dbReference>
<dbReference type="GO" id="GO:0045177">
    <property type="term" value="C:apical part of cell"/>
    <property type="evidence" value="ECO:0000266"/>
    <property type="project" value="RGD"/>
</dbReference>
<dbReference type="GO" id="GO:0016324">
    <property type="term" value="C:apical plasma membrane"/>
    <property type="evidence" value="ECO:0000314"/>
    <property type="project" value="UniProtKB"/>
</dbReference>
<dbReference type="GO" id="GO:0030424">
    <property type="term" value="C:axon"/>
    <property type="evidence" value="ECO:0000266"/>
    <property type="project" value="RGD"/>
</dbReference>
<dbReference type="GO" id="GO:0043679">
    <property type="term" value="C:axon terminus"/>
    <property type="evidence" value="ECO:0000314"/>
    <property type="project" value="RGD"/>
</dbReference>
<dbReference type="GO" id="GO:0009925">
    <property type="term" value="C:basal plasma membrane"/>
    <property type="evidence" value="ECO:0000250"/>
    <property type="project" value="UniProtKB"/>
</dbReference>
<dbReference type="GO" id="GO:0016323">
    <property type="term" value="C:basolateral plasma membrane"/>
    <property type="evidence" value="ECO:0000314"/>
    <property type="project" value="UniProtKB"/>
</dbReference>
<dbReference type="GO" id="GO:0005903">
    <property type="term" value="C:brush border"/>
    <property type="evidence" value="ECO:0000314"/>
    <property type="project" value="UniProtKB"/>
</dbReference>
<dbReference type="GO" id="GO:0031526">
    <property type="term" value="C:brush border membrane"/>
    <property type="evidence" value="ECO:0000250"/>
    <property type="project" value="UniProtKB"/>
</dbReference>
<dbReference type="GO" id="GO:0005901">
    <property type="term" value="C:caveola"/>
    <property type="evidence" value="ECO:0000266"/>
    <property type="project" value="RGD"/>
</dbReference>
<dbReference type="GO" id="GO:0005737">
    <property type="term" value="C:cytoplasm"/>
    <property type="evidence" value="ECO:0000250"/>
    <property type="project" value="UniProtKB"/>
</dbReference>
<dbReference type="GO" id="GO:0070062">
    <property type="term" value="C:extracellular exosome"/>
    <property type="evidence" value="ECO:0000266"/>
    <property type="project" value="RGD"/>
</dbReference>
<dbReference type="GO" id="GO:0016020">
    <property type="term" value="C:membrane"/>
    <property type="evidence" value="ECO:0000266"/>
    <property type="project" value="RGD"/>
</dbReference>
<dbReference type="GO" id="GO:0032809">
    <property type="term" value="C:neuronal cell body membrane"/>
    <property type="evidence" value="ECO:0000314"/>
    <property type="project" value="RGD"/>
</dbReference>
<dbReference type="GO" id="GO:0031965">
    <property type="term" value="C:nuclear membrane"/>
    <property type="evidence" value="ECO:0000250"/>
    <property type="project" value="UniProtKB"/>
</dbReference>
<dbReference type="GO" id="GO:0005634">
    <property type="term" value="C:nucleus"/>
    <property type="evidence" value="ECO:0000250"/>
    <property type="project" value="UniProtKB"/>
</dbReference>
<dbReference type="GO" id="GO:0005886">
    <property type="term" value="C:plasma membrane"/>
    <property type="evidence" value="ECO:0000314"/>
    <property type="project" value="UniProtKB"/>
</dbReference>
<dbReference type="GO" id="GO:0042383">
    <property type="term" value="C:sarcolemma"/>
    <property type="evidence" value="ECO:0000250"/>
    <property type="project" value="UniProtKB"/>
</dbReference>
<dbReference type="GO" id="GO:0008519">
    <property type="term" value="F:ammonium channel activity"/>
    <property type="evidence" value="ECO:0000250"/>
    <property type="project" value="UniProtKB"/>
</dbReference>
<dbReference type="GO" id="GO:0035379">
    <property type="term" value="F:carbon dioxide transmembrane transporter activity"/>
    <property type="evidence" value="ECO:0000250"/>
    <property type="project" value="UniProtKB"/>
</dbReference>
<dbReference type="GO" id="GO:0046875">
    <property type="term" value="F:ephrin receptor binding"/>
    <property type="evidence" value="ECO:0000266"/>
    <property type="project" value="RGD"/>
</dbReference>
<dbReference type="GO" id="GO:0015168">
    <property type="term" value="F:glycerol transmembrane transporter activity"/>
    <property type="evidence" value="ECO:0000314"/>
    <property type="project" value="UniProtKB"/>
</dbReference>
<dbReference type="GO" id="GO:0140070">
    <property type="term" value="F:hydrogen peroxide channel activity"/>
    <property type="evidence" value="ECO:0000266"/>
    <property type="project" value="RGD"/>
</dbReference>
<dbReference type="GO" id="GO:0042802">
    <property type="term" value="F:identical protein binding"/>
    <property type="evidence" value="ECO:0000266"/>
    <property type="project" value="RGD"/>
</dbReference>
<dbReference type="GO" id="GO:0005223">
    <property type="term" value="F:intracellularly cGMP-activated cation channel activity"/>
    <property type="evidence" value="ECO:0000250"/>
    <property type="project" value="UniProtKB"/>
</dbReference>
<dbReference type="GO" id="GO:0030184">
    <property type="term" value="F:nitric oxide transmembrane transporter activity"/>
    <property type="evidence" value="ECO:0000250"/>
    <property type="project" value="UniProtKB"/>
</dbReference>
<dbReference type="GO" id="GO:0005267">
    <property type="term" value="F:potassium channel activity"/>
    <property type="evidence" value="ECO:0000250"/>
    <property type="project" value="UniProtKB"/>
</dbReference>
<dbReference type="GO" id="GO:0015079">
    <property type="term" value="F:potassium ion transmembrane transporter activity"/>
    <property type="evidence" value="ECO:0000266"/>
    <property type="project" value="RGD"/>
</dbReference>
<dbReference type="GO" id="GO:0022857">
    <property type="term" value="F:transmembrane transporter activity"/>
    <property type="evidence" value="ECO:0000266"/>
    <property type="project" value="RGD"/>
</dbReference>
<dbReference type="GO" id="GO:0015250">
    <property type="term" value="F:water channel activity"/>
    <property type="evidence" value="ECO:0000315"/>
    <property type="project" value="RGD"/>
</dbReference>
<dbReference type="GO" id="GO:0005372">
    <property type="term" value="F:water transmembrane transporter activity"/>
    <property type="evidence" value="ECO:0000266"/>
    <property type="project" value="RGD"/>
</dbReference>
<dbReference type="GO" id="GO:0072488">
    <property type="term" value="P:ammonium transmembrane transport"/>
    <property type="evidence" value="ECO:0000250"/>
    <property type="project" value="UniProtKB"/>
</dbReference>
<dbReference type="GO" id="GO:0048593">
    <property type="term" value="P:camera-type eye morphogenesis"/>
    <property type="evidence" value="ECO:0000266"/>
    <property type="project" value="RGD"/>
</dbReference>
<dbReference type="GO" id="GO:0035378">
    <property type="term" value="P:carbon dioxide transmembrane transport"/>
    <property type="evidence" value="ECO:0000250"/>
    <property type="project" value="UniProtKB"/>
</dbReference>
<dbReference type="GO" id="GO:0015670">
    <property type="term" value="P:carbon dioxide transport"/>
    <property type="evidence" value="ECO:0000250"/>
    <property type="project" value="UniProtKB"/>
</dbReference>
<dbReference type="GO" id="GO:0016477">
    <property type="term" value="P:cell migration"/>
    <property type="evidence" value="ECO:0000266"/>
    <property type="project" value="RGD"/>
</dbReference>
<dbReference type="GO" id="GO:0006884">
    <property type="term" value="P:cell volume homeostasis"/>
    <property type="evidence" value="ECO:0000250"/>
    <property type="project" value="UniProtKB"/>
</dbReference>
<dbReference type="GO" id="GO:0019725">
    <property type="term" value="P:cellular homeostasis"/>
    <property type="evidence" value="ECO:0000250"/>
    <property type="project" value="UniProtKB"/>
</dbReference>
<dbReference type="GO" id="GO:0071474">
    <property type="term" value="P:cellular hyperosmotic response"/>
    <property type="evidence" value="ECO:0000250"/>
    <property type="project" value="UniProtKB"/>
</dbReference>
<dbReference type="GO" id="GO:0071320">
    <property type="term" value="P:cellular response to cAMP"/>
    <property type="evidence" value="ECO:0000250"/>
    <property type="project" value="UniProtKB"/>
</dbReference>
<dbReference type="GO" id="GO:0071280">
    <property type="term" value="P:cellular response to copper ion"/>
    <property type="evidence" value="ECO:0000250"/>
    <property type="project" value="UniProtKB"/>
</dbReference>
<dbReference type="GO" id="GO:0071549">
    <property type="term" value="P:cellular response to dexamethasone stimulus"/>
    <property type="evidence" value="ECO:0000250"/>
    <property type="project" value="UniProtKB"/>
</dbReference>
<dbReference type="GO" id="GO:0070301">
    <property type="term" value="P:cellular response to hydrogen peroxide"/>
    <property type="evidence" value="ECO:0000250"/>
    <property type="project" value="UniProtKB"/>
</dbReference>
<dbReference type="GO" id="GO:0071456">
    <property type="term" value="P:cellular response to hypoxia"/>
    <property type="evidence" value="ECO:0000250"/>
    <property type="project" value="UniProtKB"/>
</dbReference>
<dbReference type="GO" id="GO:0071260">
    <property type="term" value="P:cellular response to mechanical stimulus"/>
    <property type="evidence" value="ECO:0000250"/>
    <property type="project" value="UniProtKB"/>
</dbReference>
<dbReference type="GO" id="GO:0071288">
    <property type="term" value="P:cellular response to mercury ion"/>
    <property type="evidence" value="ECO:0000250"/>
    <property type="project" value="UniProtKB"/>
</dbReference>
<dbReference type="GO" id="GO:0071732">
    <property type="term" value="P:cellular response to nitric oxide"/>
    <property type="evidence" value="ECO:0000266"/>
    <property type="project" value="RGD"/>
</dbReference>
<dbReference type="GO" id="GO:0071300">
    <property type="term" value="P:cellular response to retinoic acid"/>
    <property type="evidence" value="ECO:0000250"/>
    <property type="project" value="UniProtKB"/>
</dbReference>
<dbReference type="GO" id="GO:0071472">
    <property type="term" value="P:cellular response to salt stress"/>
    <property type="evidence" value="ECO:0000250"/>
    <property type="project" value="UniProtKB"/>
</dbReference>
<dbReference type="GO" id="GO:0034644">
    <property type="term" value="P:cellular response to UV"/>
    <property type="evidence" value="ECO:0000250"/>
    <property type="project" value="UniProtKB"/>
</dbReference>
<dbReference type="GO" id="GO:0033326">
    <property type="term" value="P:cerebrospinal fluid secretion"/>
    <property type="evidence" value="ECO:0000266"/>
    <property type="project" value="RGD"/>
</dbReference>
<dbReference type="GO" id="GO:0019934">
    <property type="term" value="P:cGMP-mediated signaling"/>
    <property type="evidence" value="ECO:0000250"/>
    <property type="project" value="UniProtKB"/>
</dbReference>
<dbReference type="GO" id="GO:0051458">
    <property type="term" value="P:corticotropin secretion"/>
    <property type="evidence" value="ECO:0000266"/>
    <property type="project" value="RGD"/>
</dbReference>
<dbReference type="GO" id="GO:0050829">
    <property type="term" value="P:defense response to Gram-negative bacterium"/>
    <property type="evidence" value="ECO:0000266"/>
    <property type="project" value="RGD"/>
</dbReference>
<dbReference type="GO" id="GO:0051649">
    <property type="term" value="P:establishment of localization in cell"/>
    <property type="evidence" value="ECO:0000266"/>
    <property type="project" value="RGD"/>
</dbReference>
<dbReference type="GO" id="GO:0030950">
    <property type="term" value="P:establishment or maintenance of actin cytoskeleton polarity"/>
    <property type="evidence" value="ECO:0000250"/>
    <property type="project" value="UniProtKB"/>
</dbReference>
<dbReference type="GO" id="GO:0010761">
    <property type="term" value="P:fibroblast migration"/>
    <property type="evidence" value="ECO:0000266"/>
    <property type="project" value="RGD"/>
</dbReference>
<dbReference type="GO" id="GO:0003094">
    <property type="term" value="P:glomerular filtration"/>
    <property type="evidence" value="ECO:0000266"/>
    <property type="project" value="RGD"/>
</dbReference>
<dbReference type="GO" id="GO:0015793">
    <property type="term" value="P:glycerol transmembrane transport"/>
    <property type="evidence" value="ECO:0000314"/>
    <property type="project" value="UniProtKB"/>
</dbReference>
<dbReference type="GO" id="GO:0006972">
    <property type="term" value="P:hyperosmotic response"/>
    <property type="evidence" value="ECO:0000270"/>
    <property type="project" value="RGD"/>
</dbReference>
<dbReference type="GO" id="GO:0009992">
    <property type="term" value="P:intracellular water homeostasis"/>
    <property type="evidence" value="ECO:0000250"/>
    <property type="project" value="UniProtKB"/>
</dbReference>
<dbReference type="GO" id="GO:0021670">
    <property type="term" value="P:lateral ventricle development"/>
    <property type="evidence" value="ECO:0000270"/>
    <property type="project" value="UniProtKB"/>
</dbReference>
<dbReference type="GO" id="GO:0044241">
    <property type="term" value="P:lipid digestion"/>
    <property type="evidence" value="ECO:0000266"/>
    <property type="project" value="RGD"/>
</dbReference>
<dbReference type="GO" id="GO:0072220">
    <property type="term" value="P:metanephric descending thin limb development"/>
    <property type="evidence" value="ECO:0000266"/>
    <property type="project" value="RGD"/>
</dbReference>
<dbReference type="GO" id="GO:0072239">
    <property type="term" value="P:metanephric glomerulus vasculature development"/>
    <property type="evidence" value="ECO:0000266"/>
    <property type="project" value="RGD"/>
</dbReference>
<dbReference type="GO" id="GO:0072232">
    <property type="term" value="P:metanephric proximal convoluted tubule segment 2 development"/>
    <property type="evidence" value="ECO:0000266"/>
    <property type="project" value="RGD"/>
</dbReference>
<dbReference type="GO" id="GO:0072230">
    <property type="term" value="P:metanephric proximal straight tubule development"/>
    <property type="evidence" value="ECO:0000266"/>
    <property type="project" value="RGD"/>
</dbReference>
<dbReference type="GO" id="GO:0072237">
    <property type="term" value="P:metanephric proximal tubule development"/>
    <property type="evidence" value="ECO:0000270"/>
    <property type="project" value="RGD"/>
</dbReference>
<dbReference type="GO" id="GO:0050891">
    <property type="term" value="P:multicellular organismal-level water homeostasis"/>
    <property type="evidence" value="ECO:0000266"/>
    <property type="project" value="RGD"/>
</dbReference>
<dbReference type="GO" id="GO:0043066">
    <property type="term" value="P:negative regulation of apoptotic process"/>
    <property type="evidence" value="ECO:0000250"/>
    <property type="project" value="UniProtKB"/>
</dbReference>
<dbReference type="GO" id="GO:0030185">
    <property type="term" value="P:nitric oxide transport"/>
    <property type="evidence" value="ECO:0000250"/>
    <property type="project" value="UniProtKB"/>
</dbReference>
<dbReference type="GO" id="GO:0042476">
    <property type="term" value="P:odontogenesis"/>
    <property type="evidence" value="ECO:0000266"/>
    <property type="project" value="RGD"/>
</dbReference>
<dbReference type="GO" id="GO:0030157">
    <property type="term" value="P:pancreatic juice secretion"/>
    <property type="evidence" value="ECO:0000266"/>
    <property type="project" value="RGD"/>
</dbReference>
<dbReference type="GO" id="GO:0045766">
    <property type="term" value="P:positive regulation of angiogenesis"/>
    <property type="evidence" value="ECO:0000250"/>
    <property type="project" value="UniProtKB"/>
</dbReference>
<dbReference type="GO" id="GO:0010634">
    <property type="term" value="P:positive regulation of epithelial cell migration"/>
    <property type="evidence" value="ECO:0000315"/>
    <property type="project" value="RGD"/>
</dbReference>
<dbReference type="GO" id="GO:0010763">
    <property type="term" value="P:positive regulation of fibroblast migration"/>
    <property type="evidence" value="ECO:0000266"/>
    <property type="project" value="RGD"/>
</dbReference>
<dbReference type="GO" id="GO:0048146">
    <property type="term" value="P:positive regulation of fibroblast proliferation"/>
    <property type="evidence" value="ECO:0000250"/>
    <property type="project" value="UniProtKB"/>
</dbReference>
<dbReference type="GO" id="GO:0010592">
    <property type="term" value="P:positive regulation of lamellipodium assembly"/>
    <property type="evidence" value="ECO:0000315"/>
    <property type="project" value="RGD"/>
</dbReference>
<dbReference type="GO" id="GO:0046878">
    <property type="term" value="P:positive regulation of saliva secretion"/>
    <property type="evidence" value="ECO:0000250"/>
    <property type="project" value="UniProtKB"/>
</dbReference>
<dbReference type="GO" id="GO:0006813">
    <property type="term" value="P:potassium ion transport"/>
    <property type="evidence" value="ECO:0000266"/>
    <property type="project" value="RGD"/>
</dbReference>
<dbReference type="GO" id="GO:0070295">
    <property type="term" value="P:renal water absorption"/>
    <property type="evidence" value="ECO:0000266"/>
    <property type="project" value="RGD"/>
</dbReference>
<dbReference type="GO" id="GO:0003097">
    <property type="term" value="P:renal water transport"/>
    <property type="evidence" value="ECO:0000250"/>
    <property type="project" value="UniProtKB"/>
</dbReference>
<dbReference type="GO" id="GO:0043627">
    <property type="term" value="P:response to estrogen"/>
    <property type="evidence" value="ECO:0000270"/>
    <property type="project" value="RGD"/>
</dbReference>
<dbReference type="GO" id="GO:0009725">
    <property type="term" value="P:response to hormone"/>
    <property type="evidence" value="ECO:0000270"/>
    <property type="project" value="RGD"/>
</dbReference>
<dbReference type="GO" id="GO:0032940">
    <property type="term" value="P:secretion by cell"/>
    <property type="evidence" value="ECO:0000266"/>
    <property type="project" value="RGD"/>
</dbReference>
<dbReference type="GO" id="GO:0033363">
    <property type="term" value="P:secretory granule organization"/>
    <property type="evidence" value="ECO:0000266"/>
    <property type="project" value="RGD"/>
</dbReference>
<dbReference type="GO" id="GO:0019233">
    <property type="term" value="P:sensory perception of pain"/>
    <property type="evidence" value="ECO:0000266"/>
    <property type="project" value="RGD"/>
</dbReference>
<dbReference type="GO" id="GO:0035377">
    <property type="term" value="P:transepithelial water transport"/>
    <property type="evidence" value="ECO:0000250"/>
    <property type="project" value="UniProtKB"/>
</dbReference>
<dbReference type="GO" id="GO:0006833">
    <property type="term" value="P:water transport"/>
    <property type="evidence" value="ECO:0000315"/>
    <property type="project" value="RGD"/>
</dbReference>
<dbReference type="GO" id="GO:0042060">
    <property type="term" value="P:wound healing"/>
    <property type="evidence" value="ECO:0000266"/>
    <property type="project" value="RGD"/>
</dbReference>
<dbReference type="CDD" id="cd00333">
    <property type="entry name" value="MIP"/>
    <property type="match status" value="1"/>
</dbReference>
<dbReference type="FunFam" id="1.20.1080.10:FF:000012">
    <property type="entry name" value="Aquaporin-1"/>
    <property type="match status" value="1"/>
</dbReference>
<dbReference type="Gene3D" id="1.20.1080.10">
    <property type="entry name" value="Glycerol uptake facilitator protein"/>
    <property type="match status" value="1"/>
</dbReference>
<dbReference type="InterPro" id="IPR023271">
    <property type="entry name" value="Aquaporin-like"/>
</dbReference>
<dbReference type="InterPro" id="IPR023274">
    <property type="entry name" value="Aquaporin_1"/>
</dbReference>
<dbReference type="InterPro" id="IPR034294">
    <property type="entry name" value="Aquaporin_transptr"/>
</dbReference>
<dbReference type="InterPro" id="IPR000425">
    <property type="entry name" value="MIP"/>
</dbReference>
<dbReference type="InterPro" id="IPR022357">
    <property type="entry name" value="MIP_CS"/>
</dbReference>
<dbReference type="NCBIfam" id="TIGR00861">
    <property type="entry name" value="MIP"/>
    <property type="match status" value="1"/>
</dbReference>
<dbReference type="PANTHER" id="PTHR19139">
    <property type="entry name" value="AQUAPORIN TRANSPORTER"/>
    <property type="match status" value="1"/>
</dbReference>
<dbReference type="PANTHER" id="PTHR19139:SF161">
    <property type="entry name" value="AQUAPORIN-1"/>
    <property type="match status" value="1"/>
</dbReference>
<dbReference type="Pfam" id="PF00230">
    <property type="entry name" value="MIP"/>
    <property type="match status" value="1"/>
</dbReference>
<dbReference type="PRINTS" id="PR02013">
    <property type="entry name" value="AQUAPORIN1"/>
</dbReference>
<dbReference type="PRINTS" id="PR00783">
    <property type="entry name" value="MINTRINSICP"/>
</dbReference>
<dbReference type="SUPFAM" id="SSF81338">
    <property type="entry name" value="Aquaporin-like"/>
    <property type="match status" value="1"/>
</dbReference>
<dbReference type="PROSITE" id="PS00221">
    <property type="entry name" value="MIP"/>
    <property type="match status" value="1"/>
</dbReference>
<proteinExistence type="evidence at protein level"/>
<protein>
    <recommendedName>
        <fullName evidence="6">Aquaporin-1</fullName>
        <shortName>AQP-1</shortName>
    </recommendedName>
    <alternativeName>
        <fullName>Aquaporin-CHIP</fullName>
    </alternativeName>
</protein>
<sequence>MASEIKKKLFWRAVVAEFLAMTLFVFISIGSALGFNYPLERNQTLVQDNVKVSLAFGLSIATLAQSVGHISGAHLNPAVTLGLLLSCQISILRAVMYIIAQCVGAIVASAILSGITSSLLENSLGRNDLARGVNSGQGLGIEIIGTLQLVLCVLATTDRRRRDLGGSAPLAIGLSVALGHLLAIDYTGCGINPARSFGSAVLTRNFSNHWIFWVGPFIGSALAVLIYDFILAPRSSDFTDRMKVWTSGQVEEYDLDADDINSRVEMKPK</sequence>
<feature type="chain" id="PRO_0000063924" description="Aquaporin-1">
    <location>
        <begin position="1"/>
        <end position="269"/>
    </location>
</feature>
<feature type="topological domain" description="Cytoplasmic" evidence="6">
    <location>
        <begin position="1"/>
        <end position="11"/>
    </location>
</feature>
<feature type="transmembrane region" description="Helical; Name=Helix 1" evidence="2">
    <location>
        <begin position="12"/>
        <end position="29"/>
    </location>
</feature>
<feature type="topological domain" description="Extracellular" evidence="6">
    <location>
        <begin position="30"/>
        <end position="46"/>
    </location>
</feature>
<feature type="transmembrane region" description="Helical; Name=Helix 2" evidence="2">
    <location>
        <begin position="47"/>
        <end position="65"/>
    </location>
</feature>
<feature type="topological domain" description="Cytoplasmic" evidence="6">
    <location>
        <begin position="66"/>
        <end position="68"/>
    </location>
</feature>
<feature type="intramembrane region" evidence="2">
    <location>
        <begin position="69"/>
        <end position="82"/>
    </location>
</feature>
<feature type="topological domain" description="Cytoplasmic" evidence="6">
    <location>
        <begin position="83"/>
        <end position="90"/>
    </location>
</feature>
<feature type="transmembrane region" description="Helical; Name=Helix 3" evidence="2">
    <location>
        <begin position="91"/>
        <end position="109"/>
    </location>
</feature>
<feature type="topological domain" description="Extracellular" evidence="6">
    <location>
        <begin position="110"/>
        <end position="133"/>
    </location>
</feature>
<feature type="transmembrane region" description="Helical; Name=Helix 4" evidence="2">
    <location>
        <begin position="134"/>
        <end position="153"/>
    </location>
</feature>
<feature type="topological domain" description="Cytoplasmic" evidence="6">
    <location>
        <begin position="154"/>
        <end position="163"/>
    </location>
</feature>
<feature type="transmembrane region" description="Helical; Name=Helix 5" evidence="2">
    <location>
        <begin position="164"/>
        <end position="181"/>
    </location>
</feature>
<feature type="topological domain" description="Extracellular" evidence="6">
    <location>
        <begin position="182"/>
        <end position="186"/>
    </location>
</feature>
<feature type="intramembrane region" evidence="2">
    <location>
        <begin position="187"/>
        <end position="199"/>
    </location>
</feature>
<feature type="topological domain" description="Extracellular" evidence="6">
    <location>
        <begin position="200"/>
        <end position="206"/>
    </location>
</feature>
<feature type="transmembrane region" description="Helical; Name=Helix 6" evidence="2">
    <location>
        <begin position="207"/>
        <end position="224"/>
    </location>
</feature>
<feature type="topological domain" description="Cytoplasmic" evidence="6">
    <location>
        <begin position="225"/>
        <end position="269"/>
    </location>
</feature>
<feature type="short sequence motif" description="NPA 1" evidence="2">
    <location>
        <begin position="76"/>
        <end position="78"/>
    </location>
</feature>
<feature type="short sequence motif" description="NPA 2" evidence="2">
    <location>
        <begin position="192"/>
        <end position="194"/>
    </location>
</feature>
<feature type="modified residue" description="Phosphoserine" evidence="3">
    <location>
        <position position="247"/>
    </location>
</feature>
<feature type="modified residue" description="Phosphotyrosine" evidence="3">
    <location>
        <position position="253"/>
    </location>
</feature>
<feature type="modified residue" description="Phosphoserine" evidence="8">
    <location>
        <position position="262"/>
    </location>
</feature>
<feature type="glycosylation site" description="N-linked (GlcNAc...) asparagine" evidence="4">
    <location>
        <position position="42"/>
    </location>
</feature>
<feature type="glycosylation site" description="N-linked (GlcNAc...) asparagine" evidence="4">
    <location>
        <position position="205"/>
    </location>
</feature>
<feature type="sequence conflict" description="In Ref. 4; CAA50395." evidence="6" ref="4">
    <original>S</original>
    <variation>T</variation>
    <location>
        <position position="3"/>
    </location>
</feature>
<feature type="sequence conflict" description="In Ref. 3; CAA49761." evidence="6" ref="3">
    <original>I</original>
    <variation>F</variation>
    <location>
        <position position="5"/>
    </location>
</feature>
<feature type="sequence conflict" description="In Ref. 2; AAB46624." evidence="6" ref="2">
    <original>L</original>
    <variation>S</variation>
    <location>
        <position position="75"/>
    </location>
</feature>
<feature type="sequence conflict" description="In Ref. 4; CAA50395." evidence="6" ref="4">
    <original>R</original>
    <variation>Q</variation>
    <location>
        <position position="159"/>
    </location>
</feature>
<name>AQP1_RAT</name>
<reference key="1">
    <citation type="journal article" date="1992" name="Biochem. Biophys. Res. Commun.">
        <title>Isolation of a cDNA for rat CHIP28 water channel: high mRNA expression in kidney cortex and inner medulla.</title>
        <authorList>
            <person name="Deen P.M.T."/>
            <person name="Dempster J.A."/>
            <person name="Wieringa B."/>
            <person name="van Os C.H."/>
        </authorList>
    </citation>
    <scope>NUCLEOTIDE SEQUENCE [MRNA]</scope>
    <source>
        <tissue>Kidney</tissue>
    </source>
</reference>
<reference key="2">
    <citation type="journal article" date="1994" name="Pflugers Arch.">
        <title>Examination of rat salivary glands for the presence of the aquaporin CHIP.</title>
        <authorList>
            <person name="Li J."/>
            <person name="Nielsen S."/>
            <person name="Dai Y."/>
            <person name="Lazowski K.W."/>
            <person name="Christensen E.I."/>
            <person name="Tabak L.A."/>
            <person name="Baum B.J."/>
        </authorList>
    </citation>
    <scope>NUCLEOTIDE SEQUENCE [MRNA]</scope>
    <source>
        <strain>Wistar</strain>
        <tissue>Parotid gland</tissue>
    </source>
</reference>
<reference key="3">
    <citation type="journal article" date="1993" name="J. Cell Biol.">
        <title>Cloning, functional analysis and cell localization of a kidney proximal tubule water transporter homologous to CHIP28.</title>
        <authorList>
            <person name="Zhang R."/>
            <person name="Skach W."/>
            <person name="Hasegawa H."/>
            <person name="van Hoek A.N."/>
            <person name="Verkman A.S."/>
        </authorList>
    </citation>
    <scope>NUCLEOTIDE SEQUENCE [MRNA]</scope>
    <source>
        <tissue>Kidney</tissue>
    </source>
</reference>
<reference key="4">
    <citation type="journal article" date="1993" name="Circ. Res.">
        <title>Isolation of gene markers of differentiated and proliferating vascular smooth muscle cells.</title>
        <authorList>
            <person name="Shanahan C.M."/>
            <person name="Weissberg P.L."/>
            <person name="Metcalfe J.C."/>
        </authorList>
    </citation>
    <scope>NUCLEOTIDE SEQUENCE [MRNA]</scope>
    <source>
        <strain>Wistar</strain>
        <tissue>Aortic smooth muscle</tissue>
    </source>
</reference>
<reference key="5">
    <citation type="journal article" date="2004" name="Genome Res.">
        <title>The status, quality, and expansion of the NIH full-length cDNA project: the Mammalian Gene Collection (MGC).</title>
        <authorList>
            <consortium name="The MGC Project Team"/>
        </authorList>
    </citation>
    <scope>NUCLEOTIDE SEQUENCE [LARGE SCALE MRNA]</scope>
    <source>
        <tissue>Heart</tissue>
    </source>
</reference>
<reference key="6">
    <citation type="journal article" date="2005" name="Cell Tissue Res.">
        <title>Aquaporin-1 in the choroid plexuses of developing mammalian brain.</title>
        <authorList>
            <person name="Johansson P.A."/>
            <person name="Dziegielewska K.M."/>
            <person name="Ek C.J."/>
            <person name="Habgood M.D."/>
            <person name="Moellgaard K."/>
            <person name="Potter A."/>
            <person name="Schuliga M."/>
            <person name="Saunders N.R."/>
        </authorList>
    </citation>
    <scope>SUBCELLULAR LOCATION</scope>
</reference>
<reference key="7">
    <citation type="journal article" date="2012" name="Nat. Commun.">
        <title>Quantitative maps of protein phosphorylation sites across 14 different rat organs and tissues.</title>
        <authorList>
            <person name="Lundby A."/>
            <person name="Secher A."/>
            <person name="Lage K."/>
            <person name="Nordsborg N.B."/>
            <person name="Dmytriyev A."/>
            <person name="Lundby C."/>
            <person name="Olsen J.V."/>
        </authorList>
    </citation>
    <scope>PHOSPHORYLATION [LARGE SCALE ANALYSIS] AT SER-262</scope>
    <scope>IDENTIFICATION BY MASS SPECTROMETRY [LARGE SCALE ANALYSIS]</scope>
</reference>
<organism>
    <name type="scientific">Rattus norvegicus</name>
    <name type="common">Rat</name>
    <dbReference type="NCBI Taxonomy" id="10116"/>
    <lineage>
        <taxon>Eukaryota</taxon>
        <taxon>Metazoa</taxon>
        <taxon>Chordata</taxon>
        <taxon>Craniata</taxon>
        <taxon>Vertebrata</taxon>
        <taxon>Euteleostomi</taxon>
        <taxon>Mammalia</taxon>
        <taxon>Eutheria</taxon>
        <taxon>Euarchontoglires</taxon>
        <taxon>Glires</taxon>
        <taxon>Rodentia</taxon>
        <taxon>Myomorpha</taxon>
        <taxon>Muroidea</taxon>
        <taxon>Muridae</taxon>
        <taxon>Murinae</taxon>
        <taxon>Rattus</taxon>
    </lineage>
</organism>
<accession>P29975</accession>
<accession>Q5EB50</accession>
<accession>Q7TN36</accession>
<evidence type="ECO:0000250" key="1"/>
<evidence type="ECO:0000250" key="2">
    <source>
        <dbReference type="UniProtKB" id="P29972"/>
    </source>
</evidence>
<evidence type="ECO:0000250" key="3">
    <source>
        <dbReference type="UniProtKB" id="Q02013"/>
    </source>
</evidence>
<evidence type="ECO:0000255" key="4"/>
<evidence type="ECO:0000269" key="5">
    <source>
    </source>
</evidence>
<evidence type="ECO:0000305" key="6"/>
<evidence type="ECO:0000312" key="7">
    <source>
        <dbReference type="RGD" id="2141"/>
    </source>
</evidence>
<evidence type="ECO:0007744" key="8">
    <source>
    </source>
</evidence>
<gene>
    <name evidence="7" type="primary">Aqp1</name>
    <name type="synonym">Chip28</name>
</gene>